<evidence type="ECO:0000255" key="1">
    <source>
        <dbReference type="HAMAP-Rule" id="MF_01803"/>
    </source>
</evidence>
<keyword id="KW-0106">Calcium</keyword>
<keyword id="KW-0131">Cell cycle</keyword>
<keyword id="KW-0132">Cell division</keyword>
<keyword id="KW-0159">Chromosome partition</keyword>
<keyword id="KW-0963">Cytoplasm</keyword>
<keyword id="KW-0226">DNA condensation</keyword>
<accession>Q1RDT5</accession>
<dbReference type="EMBL" id="CP000243">
    <property type="protein sequence ID" value="ABE06479.1"/>
    <property type="molecule type" value="Genomic_DNA"/>
</dbReference>
<dbReference type="RefSeq" id="WP_001288856.1">
    <property type="nucleotide sequence ID" value="NZ_CP064825.1"/>
</dbReference>
<dbReference type="SMR" id="Q1RDT5"/>
<dbReference type="KEGG" id="eci:UTI89_C0994"/>
<dbReference type="HOGENOM" id="CLU_049853_0_0_6"/>
<dbReference type="Proteomes" id="UP000001952">
    <property type="component" value="Chromosome"/>
</dbReference>
<dbReference type="GO" id="GO:0005737">
    <property type="term" value="C:cytoplasm"/>
    <property type="evidence" value="ECO:0007669"/>
    <property type="project" value="UniProtKB-UniRule"/>
</dbReference>
<dbReference type="GO" id="GO:0009295">
    <property type="term" value="C:nucleoid"/>
    <property type="evidence" value="ECO:0007669"/>
    <property type="project" value="UniProtKB-SubCell"/>
</dbReference>
<dbReference type="GO" id="GO:0005509">
    <property type="term" value="F:calcium ion binding"/>
    <property type="evidence" value="ECO:0007669"/>
    <property type="project" value="UniProtKB-UniRule"/>
</dbReference>
<dbReference type="GO" id="GO:0051301">
    <property type="term" value="P:cell division"/>
    <property type="evidence" value="ECO:0007669"/>
    <property type="project" value="UniProtKB-KW"/>
</dbReference>
<dbReference type="GO" id="GO:0030261">
    <property type="term" value="P:chromosome condensation"/>
    <property type="evidence" value="ECO:0007669"/>
    <property type="project" value="UniProtKB-KW"/>
</dbReference>
<dbReference type="GO" id="GO:0007059">
    <property type="term" value="P:chromosome segregation"/>
    <property type="evidence" value="ECO:0007669"/>
    <property type="project" value="UniProtKB-UniRule"/>
</dbReference>
<dbReference type="GO" id="GO:0006260">
    <property type="term" value="P:DNA replication"/>
    <property type="evidence" value="ECO:0007669"/>
    <property type="project" value="UniProtKB-UniRule"/>
</dbReference>
<dbReference type="CDD" id="cd16337">
    <property type="entry name" value="MukF_C"/>
    <property type="match status" value="1"/>
</dbReference>
<dbReference type="CDD" id="cd16335">
    <property type="entry name" value="MukF_N"/>
    <property type="match status" value="1"/>
</dbReference>
<dbReference type="Gene3D" id="1.20.58.590">
    <property type="entry name" value="Chromosome partition protein MukF, middle domain"/>
    <property type="match status" value="1"/>
</dbReference>
<dbReference type="Gene3D" id="1.10.225.40">
    <property type="entry name" value="MukF, C-terminal domain"/>
    <property type="match status" value="1"/>
</dbReference>
<dbReference type="Gene3D" id="1.10.10.10">
    <property type="entry name" value="Winged helix-like DNA-binding domain superfamily/Winged helix DNA-binding domain"/>
    <property type="match status" value="1"/>
</dbReference>
<dbReference type="HAMAP" id="MF_01803">
    <property type="entry name" value="MukF"/>
    <property type="match status" value="1"/>
</dbReference>
<dbReference type="InterPro" id="IPR005582">
    <property type="entry name" value="Chromosome_partition_MukF"/>
</dbReference>
<dbReference type="InterPro" id="IPR033441">
    <property type="entry name" value="MukF_C"/>
</dbReference>
<dbReference type="InterPro" id="IPR038198">
    <property type="entry name" value="MukF_C_sf"/>
</dbReference>
<dbReference type="InterPro" id="IPR033440">
    <property type="entry name" value="MukF_M"/>
</dbReference>
<dbReference type="InterPro" id="IPR036141">
    <property type="entry name" value="MukF_M_sp"/>
</dbReference>
<dbReference type="InterPro" id="IPR033439">
    <property type="entry name" value="MukF_WHTH"/>
</dbReference>
<dbReference type="InterPro" id="IPR036388">
    <property type="entry name" value="WH-like_DNA-bd_sf"/>
</dbReference>
<dbReference type="InterPro" id="IPR036390">
    <property type="entry name" value="WH_DNA-bd_sf"/>
</dbReference>
<dbReference type="NCBIfam" id="NF003615">
    <property type="entry name" value="PRK05260.1"/>
    <property type="match status" value="1"/>
</dbReference>
<dbReference type="Pfam" id="PF03882">
    <property type="entry name" value="KicB"/>
    <property type="match status" value="1"/>
</dbReference>
<dbReference type="Pfam" id="PF17193">
    <property type="entry name" value="MukF_C"/>
    <property type="match status" value="1"/>
</dbReference>
<dbReference type="Pfam" id="PF17192">
    <property type="entry name" value="MukF_M"/>
    <property type="match status" value="1"/>
</dbReference>
<dbReference type="PIRSF" id="PIRSF018282">
    <property type="entry name" value="MukF"/>
    <property type="match status" value="1"/>
</dbReference>
<dbReference type="SUPFAM" id="SSF140570">
    <property type="entry name" value="MukF C-terminal domain-like"/>
    <property type="match status" value="1"/>
</dbReference>
<dbReference type="SUPFAM" id="SSF46785">
    <property type="entry name" value="Winged helix' DNA-binding domain"/>
    <property type="match status" value="1"/>
</dbReference>
<gene>
    <name evidence="1" type="primary">mukF</name>
    <name type="ordered locus">UTI89_C0994</name>
</gene>
<organism>
    <name type="scientific">Escherichia coli (strain UTI89 / UPEC)</name>
    <dbReference type="NCBI Taxonomy" id="364106"/>
    <lineage>
        <taxon>Bacteria</taxon>
        <taxon>Pseudomonadati</taxon>
        <taxon>Pseudomonadota</taxon>
        <taxon>Gammaproteobacteria</taxon>
        <taxon>Enterobacterales</taxon>
        <taxon>Enterobacteriaceae</taxon>
        <taxon>Escherichia</taxon>
    </lineage>
</organism>
<reference key="1">
    <citation type="journal article" date="2006" name="Proc. Natl. Acad. Sci. U.S.A.">
        <title>Identification of genes subject to positive selection in uropathogenic strains of Escherichia coli: a comparative genomics approach.</title>
        <authorList>
            <person name="Chen S.L."/>
            <person name="Hung C.-S."/>
            <person name="Xu J."/>
            <person name="Reigstad C.S."/>
            <person name="Magrini V."/>
            <person name="Sabo A."/>
            <person name="Blasiar D."/>
            <person name="Bieri T."/>
            <person name="Meyer R.R."/>
            <person name="Ozersky P."/>
            <person name="Armstrong J.R."/>
            <person name="Fulton R.S."/>
            <person name="Latreille J.P."/>
            <person name="Spieth J."/>
            <person name="Hooton T.M."/>
            <person name="Mardis E.R."/>
            <person name="Hultgren S.J."/>
            <person name="Gordon J.I."/>
        </authorList>
    </citation>
    <scope>NUCLEOTIDE SEQUENCE [LARGE SCALE GENOMIC DNA]</scope>
    <source>
        <strain>UTI89 / UPEC</strain>
    </source>
</reference>
<comment type="function">
    <text evidence="1">Involved in chromosome condensation, segregation and cell cycle progression. May participate in facilitating chromosome segregation by condensation DNA from both sides of a centrally located replisome during cell division. Not required for mini-F plasmid partitioning. Probably acts via its interaction with MukB and MukE. Overexpression results in anucleate cells. It has a calcium binding activity.</text>
</comment>
<comment type="subunit">
    <text evidence="1">Interacts, and probably forms a ternary complex, with MukE and MukB via its C-terminal region. The complex formation is stimulated by calcium or magnesium. It is required for an interaction between MukE and MukB.</text>
</comment>
<comment type="subcellular location">
    <subcellularLocation>
        <location evidence="1">Cytoplasm</location>
        <location evidence="1">Nucleoid</location>
    </subcellularLocation>
    <text evidence="1">Restricted to the nucleoid region.</text>
</comment>
<comment type="similarity">
    <text evidence="1">Belongs to the MukF family.</text>
</comment>
<protein>
    <recommendedName>
        <fullName evidence="1">Chromosome partition protein MukF</fullName>
    </recommendedName>
</protein>
<name>MUKF_ECOUT</name>
<sequence length="440" mass="50607">MSEFSQTVPELVAWARKNDFSISLPVDRLSFLLAVATLNGERLDGEMSEGELVDAFRHVSDAFEQTSETIGVRANNAINDMVRQRLLNRFTSEQAEGNAIYRLTPLGIGITDYYIRQREFSTLRLSMQLSIVAGELKRAADAAEEGGDEFHWHRNVYAPLKYSVAEIFDSIDLTQRLMDEQQQQVKDDIAQLLNKDWRAAISSCELLLSETSGTLRELQDTLEAAGDKLQANLLRIQDATMTHDDLHFVDRLVFDLQSKLDRIISWGQQSIDLWIGYDRHVHKFIRTAIDMDKNRVFAQRLRQSVQTYFDEPWALTYANADRLLDMRDEEMVLRDEEVTGELPEDLEYEEFNEIREQLAAIIEEQLAVYKTRQVPLDLGLVVREYLSQYPRARHFDVARIVIDQAVRLGVAQADFTGLPAKWQPINDYGAKVQAHVIDKY</sequence>
<proteinExistence type="inferred from homology"/>
<feature type="chain" id="PRO_1000069930" description="Chromosome partition protein MukF">
    <location>
        <begin position="1"/>
        <end position="440"/>
    </location>
</feature>
<feature type="region of interest" description="Leucine-zipper">
    <location>
        <begin position="208"/>
        <end position="236"/>
    </location>
</feature>